<feature type="chain" id="PRO_1000099718" description="3-phosphoshikimate 1-carboxyvinyltransferase">
    <location>
        <begin position="1"/>
        <end position="429"/>
    </location>
</feature>
<feature type="active site" description="Proton acceptor" evidence="1">
    <location>
        <position position="311"/>
    </location>
</feature>
<feature type="binding site" evidence="1">
    <location>
        <position position="20"/>
    </location>
    <ligand>
        <name>3-phosphoshikimate</name>
        <dbReference type="ChEBI" id="CHEBI:145989"/>
    </ligand>
</feature>
<feature type="binding site" evidence="1">
    <location>
        <position position="20"/>
    </location>
    <ligand>
        <name>phosphoenolpyruvate</name>
        <dbReference type="ChEBI" id="CHEBI:58702"/>
    </ligand>
</feature>
<feature type="binding site" evidence="1">
    <location>
        <position position="21"/>
    </location>
    <ligand>
        <name>3-phosphoshikimate</name>
        <dbReference type="ChEBI" id="CHEBI:145989"/>
    </ligand>
</feature>
<feature type="binding site" evidence="1">
    <location>
        <position position="25"/>
    </location>
    <ligand>
        <name>3-phosphoshikimate</name>
        <dbReference type="ChEBI" id="CHEBI:145989"/>
    </ligand>
</feature>
<feature type="binding site" evidence="1">
    <location>
        <position position="89"/>
    </location>
    <ligand>
        <name>phosphoenolpyruvate</name>
        <dbReference type="ChEBI" id="CHEBI:58702"/>
    </ligand>
</feature>
<feature type="binding site" evidence="1">
    <location>
        <position position="118"/>
    </location>
    <ligand>
        <name>phosphoenolpyruvate</name>
        <dbReference type="ChEBI" id="CHEBI:58702"/>
    </ligand>
</feature>
<feature type="binding site" evidence="1">
    <location>
        <position position="164"/>
    </location>
    <ligand>
        <name>3-phosphoshikimate</name>
        <dbReference type="ChEBI" id="CHEBI:145989"/>
    </ligand>
</feature>
<feature type="binding site" evidence="1">
    <location>
        <position position="165"/>
    </location>
    <ligand>
        <name>3-phosphoshikimate</name>
        <dbReference type="ChEBI" id="CHEBI:145989"/>
    </ligand>
</feature>
<feature type="binding site" evidence="1">
    <location>
        <position position="166"/>
    </location>
    <ligand>
        <name>3-phosphoshikimate</name>
        <dbReference type="ChEBI" id="CHEBI:145989"/>
    </ligand>
</feature>
<feature type="binding site" evidence="1">
    <location>
        <position position="166"/>
    </location>
    <ligand>
        <name>phosphoenolpyruvate</name>
        <dbReference type="ChEBI" id="CHEBI:58702"/>
    </ligand>
</feature>
<feature type="binding site" evidence="1">
    <location>
        <position position="192"/>
    </location>
    <ligand>
        <name>3-phosphoshikimate</name>
        <dbReference type="ChEBI" id="CHEBI:145989"/>
    </ligand>
</feature>
<feature type="binding site" evidence="1">
    <location>
        <position position="311"/>
    </location>
    <ligand>
        <name>3-phosphoshikimate</name>
        <dbReference type="ChEBI" id="CHEBI:145989"/>
    </ligand>
</feature>
<feature type="binding site" evidence="1">
    <location>
        <position position="338"/>
    </location>
    <ligand>
        <name>3-phosphoshikimate</name>
        <dbReference type="ChEBI" id="CHEBI:145989"/>
    </ligand>
</feature>
<feature type="binding site" evidence="1">
    <location>
        <position position="342"/>
    </location>
    <ligand>
        <name>phosphoenolpyruvate</name>
        <dbReference type="ChEBI" id="CHEBI:58702"/>
    </ligand>
</feature>
<feature type="binding site" evidence="1">
    <location>
        <position position="384"/>
    </location>
    <ligand>
        <name>phosphoenolpyruvate</name>
        <dbReference type="ChEBI" id="CHEBI:58702"/>
    </ligand>
</feature>
<keyword id="KW-0028">Amino-acid biosynthesis</keyword>
<keyword id="KW-0057">Aromatic amino acid biosynthesis</keyword>
<keyword id="KW-0963">Cytoplasm</keyword>
<keyword id="KW-0808">Transferase</keyword>
<evidence type="ECO:0000255" key="1">
    <source>
        <dbReference type="HAMAP-Rule" id="MF_00210"/>
    </source>
</evidence>
<organism>
    <name type="scientific">Methanococcus maripaludis (strain C6 / ATCC BAA-1332)</name>
    <dbReference type="NCBI Taxonomy" id="444158"/>
    <lineage>
        <taxon>Archaea</taxon>
        <taxon>Methanobacteriati</taxon>
        <taxon>Methanobacteriota</taxon>
        <taxon>Methanomada group</taxon>
        <taxon>Methanococci</taxon>
        <taxon>Methanococcales</taxon>
        <taxon>Methanococcaceae</taxon>
        <taxon>Methanococcus</taxon>
    </lineage>
</organism>
<name>AROA_METM6</name>
<comment type="function">
    <text evidence="1">Catalyzes the transfer of the enolpyruvyl moiety of phosphoenolpyruvate (PEP) to the 5-hydroxyl of shikimate-3-phosphate (S3P) to produce enolpyruvyl shikimate-3-phosphate and inorganic phosphate.</text>
</comment>
<comment type="catalytic activity">
    <reaction evidence="1">
        <text>3-phosphoshikimate + phosphoenolpyruvate = 5-O-(1-carboxyvinyl)-3-phosphoshikimate + phosphate</text>
        <dbReference type="Rhea" id="RHEA:21256"/>
        <dbReference type="ChEBI" id="CHEBI:43474"/>
        <dbReference type="ChEBI" id="CHEBI:57701"/>
        <dbReference type="ChEBI" id="CHEBI:58702"/>
        <dbReference type="ChEBI" id="CHEBI:145989"/>
        <dbReference type="EC" id="2.5.1.19"/>
    </reaction>
    <physiologicalReaction direction="left-to-right" evidence="1">
        <dbReference type="Rhea" id="RHEA:21257"/>
    </physiologicalReaction>
</comment>
<comment type="pathway">
    <text evidence="1">Metabolic intermediate biosynthesis; chorismate biosynthesis.</text>
</comment>
<comment type="subunit">
    <text evidence="1">Monomer.</text>
</comment>
<comment type="subcellular location">
    <subcellularLocation>
        <location evidence="1">Cytoplasm</location>
    </subcellularLocation>
</comment>
<comment type="similarity">
    <text evidence="1">Belongs to the EPSP synthase family.</text>
</comment>
<dbReference type="EC" id="2.5.1.19" evidence="1"/>
<dbReference type="EMBL" id="CP000867">
    <property type="protein sequence ID" value="ABX02280.1"/>
    <property type="molecule type" value="Genomic_DNA"/>
</dbReference>
<dbReference type="SMR" id="A9AAA7"/>
<dbReference type="STRING" id="444158.MmarC6_1467"/>
<dbReference type="KEGG" id="mmx:MmarC6_1467"/>
<dbReference type="eggNOG" id="arCOG04134">
    <property type="taxonomic scope" value="Archaea"/>
</dbReference>
<dbReference type="HOGENOM" id="CLU_024321_0_0_2"/>
<dbReference type="OrthoDB" id="43788at2157"/>
<dbReference type="PhylomeDB" id="A9AAA7"/>
<dbReference type="UniPathway" id="UPA00053"/>
<dbReference type="GO" id="GO:0005737">
    <property type="term" value="C:cytoplasm"/>
    <property type="evidence" value="ECO:0007669"/>
    <property type="project" value="UniProtKB-SubCell"/>
</dbReference>
<dbReference type="GO" id="GO:0003866">
    <property type="term" value="F:3-phosphoshikimate 1-carboxyvinyltransferase activity"/>
    <property type="evidence" value="ECO:0007669"/>
    <property type="project" value="UniProtKB-UniRule"/>
</dbReference>
<dbReference type="GO" id="GO:0008652">
    <property type="term" value="P:amino acid biosynthetic process"/>
    <property type="evidence" value="ECO:0007669"/>
    <property type="project" value="UniProtKB-KW"/>
</dbReference>
<dbReference type="GO" id="GO:0009073">
    <property type="term" value="P:aromatic amino acid family biosynthetic process"/>
    <property type="evidence" value="ECO:0007669"/>
    <property type="project" value="UniProtKB-KW"/>
</dbReference>
<dbReference type="GO" id="GO:0009423">
    <property type="term" value="P:chorismate biosynthetic process"/>
    <property type="evidence" value="ECO:0007669"/>
    <property type="project" value="UniProtKB-UniRule"/>
</dbReference>
<dbReference type="CDD" id="cd01556">
    <property type="entry name" value="EPSP_synthase"/>
    <property type="match status" value="1"/>
</dbReference>
<dbReference type="FunFam" id="3.65.10.10:FF:000012">
    <property type="entry name" value="Pentafunctional AROM polypeptide"/>
    <property type="match status" value="1"/>
</dbReference>
<dbReference type="Gene3D" id="3.65.10.10">
    <property type="entry name" value="Enolpyruvate transferase domain"/>
    <property type="match status" value="2"/>
</dbReference>
<dbReference type="HAMAP" id="MF_00210">
    <property type="entry name" value="EPSP_synth"/>
    <property type="match status" value="1"/>
</dbReference>
<dbReference type="InterPro" id="IPR001986">
    <property type="entry name" value="Enolpyruvate_Tfrase_dom"/>
</dbReference>
<dbReference type="InterPro" id="IPR036968">
    <property type="entry name" value="Enolpyruvate_Tfrase_sf"/>
</dbReference>
<dbReference type="InterPro" id="IPR006264">
    <property type="entry name" value="EPSP_synthase"/>
</dbReference>
<dbReference type="InterPro" id="IPR023193">
    <property type="entry name" value="EPSP_synthase_CS"/>
</dbReference>
<dbReference type="InterPro" id="IPR013792">
    <property type="entry name" value="RNA3'P_cycl/enolpyr_Trfase_a/b"/>
</dbReference>
<dbReference type="NCBIfam" id="TIGR01356">
    <property type="entry name" value="aroA"/>
    <property type="match status" value="1"/>
</dbReference>
<dbReference type="PANTHER" id="PTHR21090">
    <property type="entry name" value="AROM/DEHYDROQUINATE SYNTHASE"/>
    <property type="match status" value="1"/>
</dbReference>
<dbReference type="PANTHER" id="PTHR21090:SF5">
    <property type="entry name" value="PENTAFUNCTIONAL AROM POLYPEPTIDE"/>
    <property type="match status" value="1"/>
</dbReference>
<dbReference type="Pfam" id="PF00275">
    <property type="entry name" value="EPSP_synthase"/>
    <property type="match status" value="1"/>
</dbReference>
<dbReference type="PIRSF" id="PIRSF000505">
    <property type="entry name" value="EPSPS"/>
    <property type="match status" value="1"/>
</dbReference>
<dbReference type="SUPFAM" id="SSF55205">
    <property type="entry name" value="EPT/RTPC-like"/>
    <property type="match status" value="1"/>
</dbReference>
<dbReference type="PROSITE" id="PS00104">
    <property type="entry name" value="EPSP_SYNTHASE_1"/>
    <property type="match status" value="1"/>
</dbReference>
<dbReference type="PROSITE" id="PS00885">
    <property type="entry name" value="EPSP_SYNTHASE_2"/>
    <property type="match status" value="1"/>
</dbReference>
<proteinExistence type="inferred from homology"/>
<reference key="1">
    <citation type="submission" date="2007-10" db="EMBL/GenBank/DDBJ databases">
        <title>Complete sequence of Methanococcus maripaludis C6.</title>
        <authorList>
            <consortium name="US DOE Joint Genome Institute"/>
            <person name="Copeland A."/>
            <person name="Lucas S."/>
            <person name="Lapidus A."/>
            <person name="Barry K."/>
            <person name="Glavina del Rio T."/>
            <person name="Dalin E."/>
            <person name="Tice H."/>
            <person name="Pitluck S."/>
            <person name="Clum A."/>
            <person name="Schmutz J."/>
            <person name="Larimer F."/>
            <person name="Land M."/>
            <person name="Hauser L."/>
            <person name="Kyrpides N."/>
            <person name="Mikhailova N."/>
            <person name="Sieprawska-Lupa M."/>
            <person name="Whitman W.B."/>
            <person name="Richardson P."/>
        </authorList>
    </citation>
    <scope>NUCLEOTIDE SEQUENCE [LARGE SCALE GENOMIC DNA]</scope>
    <source>
        <strain>C6 / ATCC BAA-1332</strain>
    </source>
</reference>
<protein>
    <recommendedName>
        <fullName evidence="1">3-phosphoshikimate 1-carboxyvinyltransferase</fullName>
        <ecNumber evidence="1">2.5.1.19</ecNumber>
    </recommendedName>
    <alternativeName>
        <fullName evidence="1">5-enolpyruvylshikimate-3-phosphate synthase</fullName>
        <shortName evidence="1">EPSP synthase</shortName>
        <shortName evidence="1">EPSPS</shortName>
    </alternativeName>
</protein>
<gene>
    <name evidence="1" type="primary">aroA</name>
    <name type="ordered locus">MmarC6_1467</name>
</gene>
<sequence length="429" mass="46773">MLVVKKTPKINGILNAPPSKSYTHRAVICASLANGLSNLKNPLNGADCLSSAHACEMFGAEIELSDEQWVIRGSELKTPDNIVDIGNSGTTLRILTGISSQISNGYTILTGDDSIRKRPMQPLLDALKQLGIESFSTKNNGTAPIVVKSGKISNNVVEIRGDMSSQFITSLMMTLPFSENDSKIVLTTPLKSEPYLNITIDVLDKFGVKIEKNEEKNKLGYKIKGNQRYSPCEYIIEGDYSSASYLVAAGVLLNSDIVIKNVFKNSKQGDREIIEIVKKMGADVEINEDNVKITGPYNLKGIEIDVTDIPDLVPTIAVLGCFAEGKTVVYNGEHVRIKECDRLAACTLELSKMGAEIEEKKDGLIITGVHKLNGAKLKTYHDHRLVMAFTIAGMLADGETIIEGEDSVKISFPDFVDKMKSIGSNIEVI</sequence>
<accession>A9AAA7</accession>